<name>MCM7_SCHPO</name>
<evidence type="ECO:0000250" key="1">
    <source>
        <dbReference type="UniProtKB" id="P33993"/>
    </source>
</evidence>
<evidence type="ECO:0000269" key="2">
    <source>
    </source>
</evidence>
<evidence type="ECO:0000269" key="3">
    <source>
    </source>
</evidence>
<evidence type="ECO:0000269" key="4">
    <source>
    </source>
</evidence>
<evidence type="ECO:0000305" key="5"/>
<dbReference type="EC" id="3.6.4.12"/>
<dbReference type="EMBL" id="AF070481">
    <property type="protein sequence ID" value="AAC23693.1"/>
    <property type="molecule type" value="Genomic_DNA"/>
</dbReference>
<dbReference type="EMBL" id="CU329671">
    <property type="protein sequence ID" value="CAA20099.1"/>
    <property type="molecule type" value="Genomic_DNA"/>
</dbReference>
<dbReference type="EMBL" id="AJ000065">
    <property type="protein sequence ID" value="CAA03898.1"/>
    <property type="molecule type" value="Genomic_DNA"/>
</dbReference>
<dbReference type="PIR" id="T39991">
    <property type="entry name" value="T39991"/>
</dbReference>
<dbReference type="RefSeq" id="NP_596545.1">
    <property type="nucleotide sequence ID" value="NM_001022466.2"/>
</dbReference>
<dbReference type="SMR" id="O75001"/>
<dbReference type="BioGRID" id="277156">
    <property type="interactions" value="19"/>
</dbReference>
<dbReference type="ComplexPortal" id="CPX-2945">
    <property type="entry name" value="MCM complex"/>
</dbReference>
<dbReference type="FunCoup" id="O75001">
    <property type="interactions" value="796"/>
</dbReference>
<dbReference type="IntAct" id="O75001">
    <property type="interactions" value="5"/>
</dbReference>
<dbReference type="MINT" id="O75001"/>
<dbReference type="STRING" id="284812.O75001"/>
<dbReference type="iPTMnet" id="O75001"/>
<dbReference type="PaxDb" id="4896-SPBC25D12.03c.1"/>
<dbReference type="EnsemblFungi" id="SPBC25D12.03c.1">
    <property type="protein sequence ID" value="SPBC25D12.03c.1:pep"/>
    <property type="gene ID" value="SPBC25D12.03c"/>
</dbReference>
<dbReference type="GeneID" id="2540630"/>
<dbReference type="KEGG" id="spo:2540630"/>
<dbReference type="PomBase" id="SPBC25D12.03c">
    <property type="gene designation" value="mcm7"/>
</dbReference>
<dbReference type="VEuPathDB" id="FungiDB:SPBC25D12.03c"/>
<dbReference type="eggNOG" id="KOG0482">
    <property type="taxonomic scope" value="Eukaryota"/>
</dbReference>
<dbReference type="HOGENOM" id="CLU_000995_7_2_1"/>
<dbReference type="InParanoid" id="O75001"/>
<dbReference type="OMA" id="AQHVTYV"/>
<dbReference type="PhylomeDB" id="O75001"/>
<dbReference type="Reactome" id="R-SPO-176187">
    <property type="pathway name" value="Activation of ATR in response to replication stress"/>
</dbReference>
<dbReference type="Reactome" id="R-SPO-68867">
    <property type="pathway name" value="Assembly of the pre-replicative complex"/>
</dbReference>
<dbReference type="Reactome" id="R-SPO-68949">
    <property type="pathway name" value="Orc1 removal from chromatin"/>
</dbReference>
<dbReference type="Reactome" id="R-SPO-68962">
    <property type="pathway name" value="Activation of the pre-replicative complex"/>
</dbReference>
<dbReference type="Reactome" id="R-SPO-69052">
    <property type="pathway name" value="Switching of origins to a post-replicative state"/>
</dbReference>
<dbReference type="PRO" id="PR:O75001"/>
<dbReference type="Proteomes" id="UP000002485">
    <property type="component" value="Chromosome II"/>
</dbReference>
<dbReference type="GO" id="GO:0000785">
    <property type="term" value="C:chromatin"/>
    <property type="evidence" value="ECO:0000314"/>
    <property type="project" value="PomBase"/>
</dbReference>
<dbReference type="GO" id="GO:0031261">
    <property type="term" value="C:DNA replication preinitiation complex"/>
    <property type="evidence" value="ECO:0000305"/>
    <property type="project" value="PomBase"/>
</dbReference>
<dbReference type="GO" id="GO:0042555">
    <property type="term" value="C:MCM complex"/>
    <property type="evidence" value="ECO:0000314"/>
    <property type="project" value="PomBase"/>
</dbReference>
<dbReference type="GO" id="GO:0097373">
    <property type="term" value="C:MCM core complex"/>
    <property type="evidence" value="ECO:0000314"/>
    <property type="project" value="PomBase"/>
</dbReference>
<dbReference type="GO" id="GO:0005656">
    <property type="term" value="C:nuclear pre-replicative complex"/>
    <property type="evidence" value="ECO:0000305"/>
    <property type="project" value="PomBase"/>
</dbReference>
<dbReference type="GO" id="GO:0043596">
    <property type="term" value="C:nuclear replication fork"/>
    <property type="evidence" value="ECO:0000305"/>
    <property type="project" value="PomBase"/>
</dbReference>
<dbReference type="GO" id="GO:0005634">
    <property type="term" value="C:nucleus"/>
    <property type="evidence" value="ECO:0000314"/>
    <property type="project" value="PomBase"/>
</dbReference>
<dbReference type="GO" id="GO:0005524">
    <property type="term" value="F:ATP binding"/>
    <property type="evidence" value="ECO:0007669"/>
    <property type="project" value="UniProtKB-KW"/>
</dbReference>
<dbReference type="GO" id="GO:0016887">
    <property type="term" value="F:ATP hydrolysis activity"/>
    <property type="evidence" value="ECO:0007669"/>
    <property type="project" value="InterPro"/>
</dbReference>
<dbReference type="GO" id="GO:0003677">
    <property type="term" value="F:DNA binding"/>
    <property type="evidence" value="ECO:0007669"/>
    <property type="project" value="UniProtKB-KW"/>
</dbReference>
<dbReference type="GO" id="GO:0003678">
    <property type="term" value="F:DNA helicase activity"/>
    <property type="evidence" value="ECO:0007669"/>
    <property type="project" value="InterPro"/>
</dbReference>
<dbReference type="GO" id="GO:0006260">
    <property type="term" value="P:DNA replication"/>
    <property type="evidence" value="ECO:0000318"/>
    <property type="project" value="GO_Central"/>
</dbReference>
<dbReference type="GO" id="GO:0006270">
    <property type="term" value="P:DNA replication initiation"/>
    <property type="evidence" value="ECO:0000318"/>
    <property type="project" value="GO_Central"/>
</dbReference>
<dbReference type="GO" id="GO:0006271">
    <property type="term" value="P:DNA strand elongation involved in DNA replication"/>
    <property type="evidence" value="ECO:0000318"/>
    <property type="project" value="GO_Central"/>
</dbReference>
<dbReference type="GO" id="GO:0000727">
    <property type="term" value="P:double-strand break repair via break-induced replication"/>
    <property type="evidence" value="ECO:0000318"/>
    <property type="project" value="GO_Central"/>
</dbReference>
<dbReference type="GO" id="GO:1902975">
    <property type="term" value="P:mitotic DNA replication initiation"/>
    <property type="evidence" value="ECO:0000269"/>
    <property type="project" value="PomBase"/>
</dbReference>
<dbReference type="GO" id="GO:0006279">
    <property type="term" value="P:premeiotic DNA replication"/>
    <property type="evidence" value="ECO:0000314"/>
    <property type="project" value="ComplexPortal"/>
</dbReference>
<dbReference type="CDD" id="cd17758">
    <property type="entry name" value="MCM7"/>
    <property type="match status" value="1"/>
</dbReference>
<dbReference type="FunFam" id="2.20.28.10:FF:000004">
    <property type="entry name" value="DNA replication licensing factor MCM7"/>
    <property type="match status" value="1"/>
</dbReference>
<dbReference type="FunFam" id="3.40.50.300:FF:000288">
    <property type="entry name" value="DNA replication licensing factor MCM7"/>
    <property type="match status" value="1"/>
</dbReference>
<dbReference type="Gene3D" id="2.20.28.10">
    <property type="match status" value="1"/>
</dbReference>
<dbReference type="Gene3D" id="3.30.1640.10">
    <property type="entry name" value="mini-chromosome maintenance (MCM) complex, chain A, domain 1"/>
    <property type="match status" value="1"/>
</dbReference>
<dbReference type="Gene3D" id="2.40.50.140">
    <property type="entry name" value="Nucleic acid-binding proteins"/>
    <property type="match status" value="1"/>
</dbReference>
<dbReference type="Gene3D" id="3.40.50.300">
    <property type="entry name" value="P-loop containing nucleotide triphosphate hydrolases"/>
    <property type="match status" value="1"/>
</dbReference>
<dbReference type="InterPro" id="IPR003593">
    <property type="entry name" value="AAA+_ATPase"/>
</dbReference>
<dbReference type="InterPro" id="IPR031327">
    <property type="entry name" value="MCM"/>
</dbReference>
<dbReference type="InterPro" id="IPR008050">
    <property type="entry name" value="MCM7"/>
</dbReference>
<dbReference type="InterPro" id="IPR018525">
    <property type="entry name" value="MCM_CS"/>
</dbReference>
<dbReference type="InterPro" id="IPR001208">
    <property type="entry name" value="MCM_dom"/>
</dbReference>
<dbReference type="InterPro" id="IPR041562">
    <property type="entry name" value="MCM_lid"/>
</dbReference>
<dbReference type="InterPro" id="IPR027925">
    <property type="entry name" value="MCM_N"/>
</dbReference>
<dbReference type="InterPro" id="IPR033762">
    <property type="entry name" value="MCM_OB"/>
</dbReference>
<dbReference type="InterPro" id="IPR012340">
    <property type="entry name" value="NA-bd_OB-fold"/>
</dbReference>
<dbReference type="InterPro" id="IPR027417">
    <property type="entry name" value="P-loop_NTPase"/>
</dbReference>
<dbReference type="PANTHER" id="PTHR11630">
    <property type="entry name" value="DNA REPLICATION LICENSING FACTOR MCM FAMILY MEMBER"/>
    <property type="match status" value="1"/>
</dbReference>
<dbReference type="PANTHER" id="PTHR11630:SF26">
    <property type="entry name" value="DNA REPLICATION LICENSING FACTOR MCM7"/>
    <property type="match status" value="1"/>
</dbReference>
<dbReference type="Pfam" id="PF24901">
    <property type="entry name" value="HTH_MCM7"/>
    <property type="match status" value="1"/>
</dbReference>
<dbReference type="Pfam" id="PF00493">
    <property type="entry name" value="MCM"/>
    <property type="match status" value="1"/>
</dbReference>
<dbReference type="Pfam" id="PF17855">
    <property type="entry name" value="MCM_lid"/>
    <property type="match status" value="1"/>
</dbReference>
<dbReference type="Pfam" id="PF14551">
    <property type="entry name" value="MCM_N"/>
    <property type="match status" value="1"/>
</dbReference>
<dbReference type="Pfam" id="PF17207">
    <property type="entry name" value="MCM_OB"/>
    <property type="match status" value="1"/>
</dbReference>
<dbReference type="PRINTS" id="PR01657">
    <property type="entry name" value="MCMFAMILY"/>
</dbReference>
<dbReference type="PRINTS" id="PR01663">
    <property type="entry name" value="MCMPROTEIN7"/>
</dbReference>
<dbReference type="SMART" id="SM00382">
    <property type="entry name" value="AAA"/>
    <property type="match status" value="1"/>
</dbReference>
<dbReference type="SMART" id="SM00350">
    <property type="entry name" value="MCM"/>
    <property type="match status" value="1"/>
</dbReference>
<dbReference type="SUPFAM" id="SSF50249">
    <property type="entry name" value="Nucleic acid-binding proteins"/>
    <property type="match status" value="1"/>
</dbReference>
<dbReference type="SUPFAM" id="SSF52540">
    <property type="entry name" value="P-loop containing nucleoside triphosphate hydrolases"/>
    <property type="match status" value="1"/>
</dbReference>
<dbReference type="PROSITE" id="PS00847">
    <property type="entry name" value="MCM_1"/>
    <property type="match status" value="1"/>
</dbReference>
<dbReference type="PROSITE" id="PS50051">
    <property type="entry name" value="MCM_2"/>
    <property type="match status" value="1"/>
</dbReference>
<feature type="chain" id="PRO_0000194123" description="DNA replication licensing factor mcm7">
    <location>
        <begin position="1"/>
        <end position="760"/>
    </location>
</feature>
<feature type="domain" description="MCM">
    <location>
        <begin position="353"/>
        <end position="559"/>
    </location>
</feature>
<feature type="short sequence motif" description="Arginine finger">
    <location>
        <begin position="535"/>
        <end position="538"/>
    </location>
</feature>
<feature type="binding site" evidence="1">
    <location>
        <position position="366"/>
    </location>
    <ligand>
        <name>ATP</name>
        <dbReference type="ChEBI" id="CHEBI:30616"/>
        <label>1</label>
        <note>ligand shared with MCM3</note>
    </ligand>
</feature>
<feature type="binding site" evidence="1">
    <location>
        <position position="406"/>
    </location>
    <ligand>
        <name>ATP</name>
        <dbReference type="ChEBI" id="CHEBI:30616"/>
        <label>1</label>
        <note>ligand shared with MCM3</note>
    </ligand>
</feature>
<feature type="binding site" evidence="1">
    <location>
        <position position="408"/>
    </location>
    <ligand>
        <name>ATP</name>
        <dbReference type="ChEBI" id="CHEBI:30616"/>
        <label>1</label>
        <note>ligand shared with MCM3</note>
    </ligand>
</feature>
<feature type="binding site" evidence="1">
    <location>
        <position position="409"/>
    </location>
    <ligand>
        <name>ATP</name>
        <dbReference type="ChEBI" id="CHEBI:30616"/>
        <label>1</label>
        <note>ligand shared with MCM3</note>
    </ligand>
</feature>
<feature type="binding site" evidence="1">
    <location>
        <position position="410"/>
    </location>
    <ligand>
        <name>ATP</name>
        <dbReference type="ChEBI" id="CHEBI:30616"/>
        <label>1</label>
        <note>ligand shared with MCM3</note>
    </ligand>
</feature>
<feature type="binding site" evidence="1">
    <location>
        <position position="511"/>
    </location>
    <ligand>
        <name>ATP</name>
        <dbReference type="ChEBI" id="CHEBI:30616"/>
        <label>1</label>
        <note>ligand shared with MCM3</note>
    </ligand>
</feature>
<feature type="binding site" evidence="1">
    <location>
        <position position="536"/>
    </location>
    <ligand>
        <name>ATP</name>
        <dbReference type="ChEBI" id="CHEBI:30616"/>
        <label>2</label>
        <note>ligand shared with MCM4</note>
    </ligand>
</feature>
<feature type="binding site" evidence="1">
    <location>
        <position position="630"/>
    </location>
    <ligand>
        <name>ATP</name>
        <dbReference type="ChEBI" id="CHEBI:30616"/>
        <label>2</label>
        <note>ligand shared with MCM4</note>
    </ligand>
</feature>
<feature type="sequence conflict" description="In Ref. 3; CAA03898." evidence="5" ref="3">
    <original>V</original>
    <variation>I</variation>
    <location>
        <position position="457"/>
    </location>
</feature>
<sequence length="760" mass="85622">MALPTIDLKIPEYEECQHKITDFLSHFKQEQVQDGQQNQDISMSDAGDEPFLKSKYMDILQKISNRESNVINVDLNDLYEFDPSDTQLLHNIESNAKRFVELFSQCADALMPPPTVEINYRNEVLDVIMQQRVQRNENIDPEHKGFPPELTRGYDLYFRPVTRNKKPFSVRDLRGENLGSLLTVRGIVTRTSDVKPSLTVNAYTCDRCGYEVFQEIRQKTFLPMSECPSDECKKNDAKGQLFMSTRASKFLPFQEVKIQELTNQVPIGHIPRSLTVHLYGAITRSVNPGDIVDISGIFLPTPYTGFRAMRAGLLTDTYLECHYVSQIIKNYTNIEKTPQSEAAIAELNQGGNVYEKLAKSIAPEIYGHEDVKKALLLLLVGGVTKELGDGMRIRGDINICLTGDPGVAKSQLLKYISKVAPRGVYTTGRGSSGVGLTAAVMRDPVTDEMVLEGGALVLADNGICCIDEFDKMDESDRTAIHEVMEQQTISISKAGITTTLNARTSILAAANPLYGRYNPKVAPIHNINLPAALLSRFDILFLILDTPSRETDEHLAQHVTYVHMHNEQPKMDFEPLDPNMIRHYISSARQYRPVVPKDVCDYVTGAYVQLRQNQKRDEANERQFAHTTPRTLLAILRMGQALARLRFSNRVEIGDVDEALRLMSVSKSSLYDDLDPSSHDTTITSKIYKIIRDMLNSIPDVEGNERSLTLRAIRERVLAKGFTEDHLINTIQEYTDLGVLLTTNNGQTIMFLDPDLHMEN</sequence>
<gene>
    <name type="primary">mcm7</name>
    <name type="ORF">SPBC25D12.03c</name>
</gene>
<reference key="1">
    <citation type="journal article" date="2001" name="Genetics">
        <title>Characterization of Schizosaccharomyces pombe mcm7(+) and cdc23(+) (MCM10) and interactions with replication checkpoints.</title>
        <authorList>
            <person name="Liang D.T."/>
            <person name="Forsburg S.L."/>
        </authorList>
    </citation>
    <scope>NUCLEOTIDE SEQUENCE [GENOMIC DNA]</scope>
    <scope>FUNCTION</scope>
    <scope>SUBUNIT</scope>
    <scope>SUBCELLULAR LOCATION</scope>
    <source>
        <strain>SP011</strain>
    </source>
</reference>
<reference key="2">
    <citation type="journal article" date="2002" name="Nature">
        <title>The genome sequence of Schizosaccharomyces pombe.</title>
        <authorList>
            <person name="Wood V."/>
            <person name="Gwilliam R."/>
            <person name="Rajandream M.A."/>
            <person name="Lyne M.H."/>
            <person name="Lyne R."/>
            <person name="Stewart A."/>
            <person name="Sgouros J.G."/>
            <person name="Peat N."/>
            <person name="Hayles J."/>
            <person name="Baker S.G."/>
            <person name="Basham D."/>
            <person name="Bowman S."/>
            <person name="Brooks K."/>
            <person name="Brown D."/>
            <person name="Brown S."/>
            <person name="Chillingworth T."/>
            <person name="Churcher C.M."/>
            <person name="Collins M."/>
            <person name="Connor R."/>
            <person name="Cronin A."/>
            <person name="Davis P."/>
            <person name="Feltwell T."/>
            <person name="Fraser A."/>
            <person name="Gentles S."/>
            <person name="Goble A."/>
            <person name="Hamlin N."/>
            <person name="Harris D.E."/>
            <person name="Hidalgo J."/>
            <person name="Hodgson G."/>
            <person name="Holroyd S."/>
            <person name="Hornsby T."/>
            <person name="Howarth S."/>
            <person name="Huckle E.J."/>
            <person name="Hunt S."/>
            <person name="Jagels K."/>
            <person name="James K.D."/>
            <person name="Jones L."/>
            <person name="Jones M."/>
            <person name="Leather S."/>
            <person name="McDonald S."/>
            <person name="McLean J."/>
            <person name="Mooney P."/>
            <person name="Moule S."/>
            <person name="Mungall K.L."/>
            <person name="Murphy L.D."/>
            <person name="Niblett D."/>
            <person name="Odell C."/>
            <person name="Oliver K."/>
            <person name="O'Neil S."/>
            <person name="Pearson D."/>
            <person name="Quail M.A."/>
            <person name="Rabbinowitsch E."/>
            <person name="Rutherford K.M."/>
            <person name="Rutter S."/>
            <person name="Saunders D."/>
            <person name="Seeger K."/>
            <person name="Sharp S."/>
            <person name="Skelton J."/>
            <person name="Simmonds M.N."/>
            <person name="Squares R."/>
            <person name="Squares S."/>
            <person name="Stevens K."/>
            <person name="Taylor K."/>
            <person name="Taylor R.G."/>
            <person name="Tivey A."/>
            <person name="Walsh S.V."/>
            <person name="Warren T."/>
            <person name="Whitehead S."/>
            <person name="Woodward J.R."/>
            <person name="Volckaert G."/>
            <person name="Aert R."/>
            <person name="Robben J."/>
            <person name="Grymonprez B."/>
            <person name="Weltjens I."/>
            <person name="Vanstreels E."/>
            <person name="Rieger M."/>
            <person name="Schaefer M."/>
            <person name="Mueller-Auer S."/>
            <person name="Gabel C."/>
            <person name="Fuchs M."/>
            <person name="Duesterhoeft A."/>
            <person name="Fritzc C."/>
            <person name="Holzer E."/>
            <person name="Moestl D."/>
            <person name="Hilbert H."/>
            <person name="Borzym K."/>
            <person name="Langer I."/>
            <person name="Beck A."/>
            <person name="Lehrach H."/>
            <person name="Reinhardt R."/>
            <person name="Pohl T.M."/>
            <person name="Eger P."/>
            <person name="Zimmermann W."/>
            <person name="Wedler H."/>
            <person name="Wambutt R."/>
            <person name="Purnelle B."/>
            <person name="Goffeau A."/>
            <person name="Cadieu E."/>
            <person name="Dreano S."/>
            <person name="Gloux S."/>
            <person name="Lelaure V."/>
            <person name="Mottier S."/>
            <person name="Galibert F."/>
            <person name="Aves S.J."/>
            <person name="Xiang Z."/>
            <person name="Hunt C."/>
            <person name="Moore K."/>
            <person name="Hurst S.M."/>
            <person name="Lucas M."/>
            <person name="Rochet M."/>
            <person name="Gaillardin C."/>
            <person name="Tallada V.A."/>
            <person name="Garzon A."/>
            <person name="Thode G."/>
            <person name="Daga R.R."/>
            <person name="Cruzado L."/>
            <person name="Jimenez J."/>
            <person name="Sanchez M."/>
            <person name="del Rey F."/>
            <person name="Benito J."/>
            <person name="Dominguez A."/>
            <person name="Revuelta J.L."/>
            <person name="Moreno S."/>
            <person name="Armstrong J."/>
            <person name="Forsburg S.L."/>
            <person name="Cerutti L."/>
            <person name="Lowe T."/>
            <person name="McCombie W.R."/>
            <person name="Paulsen I."/>
            <person name="Potashkin J."/>
            <person name="Shpakovski G.V."/>
            <person name="Ussery D."/>
            <person name="Barrell B.G."/>
            <person name="Nurse P."/>
        </authorList>
    </citation>
    <scope>NUCLEOTIDE SEQUENCE [LARGE SCALE GENOMIC DNA]</scope>
    <source>
        <strain>972 / ATCC 24843</strain>
    </source>
</reference>
<reference key="3">
    <citation type="journal article" date="1997" name="Genes Cells">
        <title>A globular complex formation by Nda1 and the other five members of the MCM protein family in fission yeast.</title>
        <authorList>
            <person name="Adachi Y."/>
            <person name="Usukura J."/>
            <person name="Yanagida M."/>
        </authorList>
    </citation>
    <scope>NUCLEOTIDE SEQUENCE [GENOMIC DNA] OF 367-466</scope>
    <source>
        <strain>972 / ATCC 24843</strain>
    </source>
</reference>
<reference key="4">
    <citation type="journal article" date="2002" name="Mol. Biol. Cell">
        <title>SpSld3 is required for loading and maintenance of SpCdc45 on chromatin in DNA replication in fission yeast.</title>
        <authorList>
            <person name="Nakajima R."/>
            <person name="Masukata H."/>
        </authorList>
    </citation>
    <scope>INTERACTION WITH SLD3</scope>
</reference>
<reference key="5">
    <citation type="journal article" date="2003" name="Proc. Natl. Acad. Sci. U.S.A.">
        <title>The Cdc23 (Mcm10) protein is required for the phosphorylation of minichromosome maintenance complex by the Dfp1-Hsk1 kinase.</title>
        <authorList>
            <person name="Lee J.-K."/>
            <person name="Seo Y.-S."/>
            <person name="Hurwitz J."/>
        </authorList>
    </citation>
    <scope>INTERACTION WITH MCM10</scope>
</reference>
<protein>
    <recommendedName>
        <fullName>DNA replication licensing factor mcm7</fullName>
        <ecNumber>3.6.4.12</ecNumber>
    </recommendedName>
    <alternativeName>
        <fullName>Minichromosome maintenance protein 7</fullName>
    </alternativeName>
</protein>
<proteinExistence type="evidence at protein level"/>
<comment type="function">
    <text evidence="1 2">Acts as a component of the MCM2-7 complex (MCM complex) which is the replicative helicase essential for 'once per cell cycle' DNA replication initiation and elongation in eukaryotic cells. Core component of CDC45-MCM-GINS (CMG) helicase, the molecular machine that unwinds template DNA during replication, and around which the replisome is built. The active ATPase sites in the MCM2-7 ring are formed through the interaction surfaces of two neighboring subunits such that a critical structure of a conserved arginine finger motif is provided in trans relative to the ATP-binding site of the Walker A box of the adjacent subunit. The six ATPase active sites, however, are likely to contribute differentially to the complex helicase activity (By similarity). Required for the progression of S phase (PubMed:11606526).</text>
</comment>
<comment type="catalytic activity">
    <reaction evidence="1">
        <text>ATP + H2O = ADP + phosphate + H(+)</text>
        <dbReference type="Rhea" id="RHEA:13065"/>
        <dbReference type="ChEBI" id="CHEBI:15377"/>
        <dbReference type="ChEBI" id="CHEBI:15378"/>
        <dbReference type="ChEBI" id="CHEBI:30616"/>
        <dbReference type="ChEBI" id="CHEBI:43474"/>
        <dbReference type="ChEBI" id="CHEBI:456216"/>
        <dbReference type="EC" id="3.6.4.12"/>
    </reaction>
    <physiologicalReaction direction="left-to-right" evidence="1">
        <dbReference type="Rhea" id="RHEA:13066"/>
    </physiologicalReaction>
</comment>
<comment type="subunit">
    <text evidence="2 3 4 5">Component of the mcm2-7 complex. The complex forms a toroidal hexameric ring with the proposed subunit order mcm2-mcm6-mcm4-mcm7-mcm3-mcm5 (Probable). The heterodimers of mcm4/mcm6 and mcm3/mcm5 interact with mcm2 and mcm7. Interacts with sld3 and mcm10.</text>
</comment>
<comment type="interaction">
    <interactant intactId="EBI-913851">
        <id>O75001</id>
    </interactant>
    <interactant intactId="EBI-7492115">
        <id>O94450</id>
        <label>SPAC1687.04</label>
    </interactant>
    <organismsDiffer>false</organismsDiffer>
    <experiments>2</experiments>
</comment>
<comment type="subcellular location">
    <subcellularLocation>
        <location evidence="2">Nucleus</location>
    </subcellularLocation>
</comment>
<comment type="similarity">
    <text evidence="5">Belongs to the MCM family.</text>
</comment>
<organism>
    <name type="scientific">Schizosaccharomyces pombe (strain 972 / ATCC 24843)</name>
    <name type="common">Fission yeast</name>
    <dbReference type="NCBI Taxonomy" id="284812"/>
    <lineage>
        <taxon>Eukaryota</taxon>
        <taxon>Fungi</taxon>
        <taxon>Dikarya</taxon>
        <taxon>Ascomycota</taxon>
        <taxon>Taphrinomycotina</taxon>
        <taxon>Schizosaccharomycetes</taxon>
        <taxon>Schizosaccharomycetales</taxon>
        <taxon>Schizosaccharomycetaceae</taxon>
        <taxon>Schizosaccharomyces</taxon>
    </lineage>
</organism>
<keyword id="KW-0067">ATP-binding</keyword>
<keyword id="KW-0131">Cell cycle</keyword>
<keyword id="KW-0235">DNA replication</keyword>
<keyword id="KW-0238">DNA-binding</keyword>
<keyword id="KW-0347">Helicase</keyword>
<keyword id="KW-0378">Hydrolase</keyword>
<keyword id="KW-0547">Nucleotide-binding</keyword>
<keyword id="KW-0539">Nucleus</keyword>
<keyword id="KW-1185">Reference proteome</keyword>
<accession>O75001</accession>
<accession>P87302</accession>